<sequence length="738" mass="80992">MSTYRKTYKNQSKRFNNGNNSNSTSTELTNLVEMFPDWEADELQGLLSENDNSLEIVIDLIVNNKVSKWEPIKKEKHKKKEHKDDTTDSVTGNANGASNSGSSNSTTASGDRRLNNKAKASTSSRPPKRQQHPNAAHKKNEKTERSKASTVSTTTTSATSSVTKESVPPSNSWAAALSNDKPKKQETKSEASESIPSSNDGGDAETVPEVEQAETLEESHQEPENVEEPIESVSEQSQPENTKPVLKSAAIPEPKQGSWASAIAPKTKPKPKTVSKPVPQPEESKPEEHIPVQEEAQPVESILEDKPAVEAVQPVQPPVEDEPVEAPAASSVAAVADASFSEPTASSIIDQQPQVVLPTTQQQVDSVGISFGSLSVDAGEPKEAAEVIQDETISEQVQPEQQQQSQQQPLQEQQRYGLYNQQPTQQRYQQNNYQQQGQYSKQQQQQQQQQTSQPTQQQQQYDYYGQYQQQQYPQQTAQPGAQFGGYPGFDYNAYNQQAFAAAAAASPAASHVATIGGGVGGYNQYAQQANSADSTQSPIVNQSTLQQQQAAVLAAQQQQQQLPTPFGYPAYYNYYYNNPYFNAGGLGSTGFSAPQQGTQQGTQQQQSQQSGQQQQQVSSANQQGSVSSNSFGAQQQYYNPNQFNSRYPGYSYPPQQQNQQSSQHTSGQSQQGAQTTSDGASDGQQTSQQGQSSQQPQQQQQQHAQPVPQQHMMPQYGAYQQYPQYGYQDSNQYRGGWY</sequence>
<comment type="function">
    <text evidence="1">Recruits the ubiquitination machinery to RNA polymerase II for polyubiquitination, removal and degradation, when the transcription-coupled repair (TCR) factor RAD26 fails to efficiently displace stalled RNA polymerase II. Also involved in telomere length regulation. Binds DNA.</text>
</comment>
<comment type="subunit">
    <text evidence="1">Homodimer; may form higher order oligomers. Interacts with the large RNA polymerase II subunit RPO21; the interaction is direct and serves to bridge RPO21 to the Elongin complex in a manner dependent on transcription stress. Interacts with RAD26.</text>
</comment>
<comment type="subcellular location">
    <subcellularLocation>
        <location evidence="1">Cytoplasm</location>
    </subcellularLocation>
    <subcellularLocation>
        <location evidence="1">Nucleus</location>
    </subcellularLocation>
    <subcellularLocation>
        <location evidence="1">Chromosome</location>
        <location evidence="1">Telomere</location>
    </subcellularLocation>
    <text evidence="1">During transcription stress, localizes to the nucleus following proteolytic cleavage by the proteasome.</text>
</comment>
<comment type="PTM">
    <text evidence="1">Ubiquitinated.</text>
</comment>
<comment type="PTM">
    <text evidence="1">Proteolytically cleaved by the proteasome in response to transcription stress; the resulting N-terminal form constitutes the activated nuclear form and the C-terminal portion is degraded.</text>
</comment>
<comment type="similarity">
    <text evidence="4">Belongs to the DEF1 family.</text>
</comment>
<comment type="sequence caution" evidence="4">
    <conflict type="miscellaneous discrepancy">
        <sequence resource="EMBL-CDS" id="AOW28944"/>
    </conflict>
    <text>Translation C-terminally extended.</text>
</comment>
<feature type="chain" id="PRO_0000405663" description="RNA polymerase II degradation factor 1">
    <location>
        <begin position="1"/>
        <end position="738"/>
    </location>
</feature>
<feature type="domain" description="CUE" evidence="2">
    <location>
        <begin position="23"/>
        <end position="66"/>
    </location>
</feature>
<feature type="region of interest" description="Disordered" evidence="3">
    <location>
        <begin position="1"/>
        <end position="25"/>
    </location>
</feature>
<feature type="region of interest" description="Disordered" evidence="3">
    <location>
        <begin position="73"/>
        <end position="306"/>
    </location>
</feature>
<feature type="region of interest" description="Disordered" evidence="3">
    <location>
        <begin position="372"/>
        <end position="460"/>
    </location>
</feature>
<feature type="region of interest" description="Disordered" evidence="3">
    <location>
        <begin position="587"/>
        <end position="711"/>
    </location>
</feature>
<feature type="compositionally biased region" description="Basic residues" evidence="3">
    <location>
        <begin position="1"/>
        <end position="12"/>
    </location>
</feature>
<feature type="compositionally biased region" description="Low complexity" evidence="3">
    <location>
        <begin position="16"/>
        <end position="25"/>
    </location>
</feature>
<feature type="compositionally biased region" description="Low complexity" evidence="3">
    <location>
        <begin position="91"/>
        <end position="109"/>
    </location>
</feature>
<feature type="compositionally biased region" description="Basic residues" evidence="3">
    <location>
        <begin position="126"/>
        <end position="140"/>
    </location>
</feature>
<feature type="compositionally biased region" description="Low complexity" evidence="3">
    <location>
        <begin position="148"/>
        <end position="164"/>
    </location>
</feature>
<feature type="compositionally biased region" description="Basic and acidic residues" evidence="3">
    <location>
        <begin position="180"/>
        <end position="191"/>
    </location>
</feature>
<feature type="compositionally biased region" description="Acidic residues" evidence="3">
    <location>
        <begin position="202"/>
        <end position="216"/>
    </location>
</feature>
<feature type="compositionally biased region" description="Basic and acidic residues" evidence="3">
    <location>
        <begin position="282"/>
        <end position="292"/>
    </location>
</feature>
<feature type="compositionally biased region" description="Low complexity" evidence="3">
    <location>
        <begin position="394"/>
        <end position="460"/>
    </location>
</feature>
<feature type="compositionally biased region" description="Low complexity" evidence="3">
    <location>
        <begin position="595"/>
        <end position="630"/>
    </location>
</feature>
<feature type="compositionally biased region" description="Polar residues" evidence="3">
    <location>
        <begin position="631"/>
        <end position="645"/>
    </location>
</feature>
<feature type="compositionally biased region" description="Low complexity" evidence="3">
    <location>
        <begin position="647"/>
        <end position="677"/>
    </location>
</feature>
<feature type="compositionally biased region" description="Low complexity" evidence="3">
    <location>
        <begin position="684"/>
        <end position="711"/>
    </location>
</feature>
<keyword id="KW-0158">Chromosome</keyword>
<keyword id="KW-0963">Cytoplasm</keyword>
<keyword id="KW-0227">DNA damage</keyword>
<keyword id="KW-0234">DNA repair</keyword>
<keyword id="KW-0238">DNA-binding</keyword>
<keyword id="KW-0539">Nucleus</keyword>
<keyword id="KW-1185">Reference proteome</keyword>
<keyword id="KW-0779">Telomere</keyword>
<keyword id="KW-0832">Ubl conjugation</keyword>
<keyword id="KW-0833">Ubl conjugation pathway</keyword>
<protein>
    <recommendedName>
        <fullName>RNA polymerase II degradation factor 1</fullName>
    </recommendedName>
</protein>
<gene>
    <name type="primary">DEF1</name>
    <name type="ordered locus">CAALFM_C401720CA</name>
    <name type="ORF">CaO19.12092</name>
    <name type="ORF">CaO19.4622</name>
</gene>
<name>DEF1_CANAL</name>
<accession>Q5AMM4</accession>
<accession>A0A1D8PLC5</accession>
<organism>
    <name type="scientific">Candida albicans (strain SC5314 / ATCC MYA-2876)</name>
    <name type="common">Yeast</name>
    <dbReference type="NCBI Taxonomy" id="237561"/>
    <lineage>
        <taxon>Eukaryota</taxon>
        <taxon>Fungi</taxon>
        <taxon>Dikarya</taxon>
        <taxon>Ascomycota</taxon>
        <taxon>Saccharomycotina</taxon>
        <taxon>Pichiomycetes</taxon>
        <taxon>Debaryomycetaceae</taxon>
        <taxon>Candida/Lodderomyces clade</taxon>
        <taxon>Candida</taxon>
    </lineage>
</organism>
<proteinExistence type="inferred from homology"/>
<dbReference type="EMBL" id="CP017626">
    <property type="protein sequence ID" value="AOW28944.1"/>
    <property type="status" value="ALT_SEQ"/>
    <property type="molecule type" value="Genomic_DNA"/>
</dbReference>
<dbReference type="RefSeq" id="XP_722694.2">
    <property type="nucleotide sequence ID" value="XM_717601.2"/>
</dbReference>
<dbReference type="SMR" id="Q5AMM4"/>
<dbReference type="BioGRID" id="1218646">
    <property type="interactions" value="1"/>
</dbReference>
<dbReference type="STRING" id="237561.Q5AMM4"/>
<dbReference type="GeneID" id="3635589"/>
<dbReference type="KEGG" id="cal:CAALFM_C401720CA"/>
<dbReference type="eggNOG" id="ENOG502S359">
    <property type="taxonomic scope" value="Eukaryota"/>
</dbReference>
<dbReference type="HOGENOM" id="CLU_043289_0_0_1"/>
<dbReference type="InParanoid" id="Q5AMM4"/>
<dbReference type="OrthoDB" id="5396806at2759"/>
<dbReference type="PRO" id="PR:Q5AMM4"/>
<dbReference type="Proteomes" id="UP000000559">
    <property type="component" value="Chromosome 4"/>
</dbReference>
<dbReference type="GO" id="GO:0000781">
    <property type="term" value="C:chromosome, telomeric region"/>
    <property type="evidence" value="ECO:0007669"/>
    <property type="project" value="UniProtKB-SubCell"/>
</dbReference>
<dbReference type="GO" id="GO:0005737">
    <property type="term" value="C:cytoplasm"/>
    <property type="evidence" value="ECO:0007669"/>
    <property type="project" value="UniProtKB-SubCell"/>
</dbReference>
<dbReference type="GO" id="GO:0005634">
    <property type="term" value="C:nucleus"/>
    <property type="evidence" value="ECO:0007669"/>
    <property type="project" value="UniProtKB-SubCell"/>
</dbReference>
<dbReference type="GO" id="GO:0003677">
    <property type="term" value="F:DNA binding"/>
    <property type="evidence" value="ECO:0007669"/>
    <property type="project" value="UniProtKB-KW"/>
</dbReference>
<dbReference type="GO" id="GO:0043130">
    <property type="term" value="F:ubiquitin binding"/>
    <property type="evidence" value="ECO:0007669"/>
    <property type="project" value="InterPro"/>
</dbReference>
<dbReference type="GO" id="GO:0006281">
    <property type="term" value="P:DNA repair"/>
    <property type="evidence" value="ECO:0007669"/>
    <property type="project" value="UniProtKB-KW"/>
</dbReference>
<dbReference type="InterPro" id="IPR003892">
    <property type="entry name" value="CUE"/>
</dbReference>
<dbReference type="Pfam" id="PF02845">
    <property type="entry name" value="CUE"/>
    <property type="match status" value="1"/>
</dbReference>
<dbReference type="PROSITE" id="PS51140">
    <property type="entry name" value="CUE"/>
    <property type="match status" value="1"/>
</dbReference>
<reference key="1">
    <citation type="journal article" date="2004" name="Proc. Natl. Acad. Sci. U.S.A.">
        <title>The diploid genome sequence of Candida albicans.</title>
        <authorList>
            <person name="Jones T."/>
            <person name="Federspiel N.A."/>
            <person name="Chibana H."/>
            <person name="Dungan J."/>
            <person name="Kalman S."/>
            <person name="Magee B.B."/>
            <person name="Newport G."/>
            <person name="Thorstenson Y.R."/>
            <person name="Agabian N."/>
            <person name="Magee P.T."/>
            <person name="Davis R.W."/>
            <person name="Scherer S."/>
        </authorList>
    </citation>
    <scope>NUCLEOTIDE SEQUENCE [LARGE SCALE GENOMIC DNA]</scope>
    <source>
        <strain>SC5314 / ATCC MYA-2876</strain>
    </source>
</reference>
<reference key="2">
    <citation type="journal article" date="2007" name="Genome Biol.">
        <title>Assembly of the Candida albicans genome into sixteen supercontigs aligned on the eight chromosomes.</title>
        <authorList>
            <person name="van het Hoog M."/>
            <person name="Rast T.J."/>
            <person name="Martchenko M."/>
            <person name="Grindle S."/>
            <person name="Dignard D."/>
            <person name="Hogues H."/>
            <person name="Cuomo C."/>
            <person name="Berriman M."/>
            <person name="Scherer S."/>
            <person name="Magee B.B."/>
            <person name="Whiteway M."/>
            <person name="Chibana H."/>
            <person name="Nantel A."/>
            <person name="Magee P.T."/>
        </authorList>
    </citation>
    <scope>GENOME REANNOTATION</scope>
    <source>
        <strain>SC5314 / ATCC MYA-2876</strain>
    </source>
</reference>
<reference key="3">
    <citation type="journal article" date="2013" name="Genome Biol.">
        <title>Assembly of a phased diploid Candida albicans genome facilitates allele-specific measurements and provides a simple model for repeat and indel structure.</title>
        <authorList>
            <person name="Muzzey D."/>
            <person name="Schwartz K."/>
            <person name="Weissman J.S."/>
            <person name="Sherlock G."/>
        </authorList>
    </citation>
    <scope>NUCLEOTIDE SEQUENCE [LARGE SCALE GENOMIC DNA]</scope>
    <scope>GENOME REANNOTATION</scope>
    <source>
        <strain>SC5314 / ATCC MYA-2876</strain>
    </source>
</reference>
<evidence type="ECO:0000250" key="1">
    <source>
        <dbReference type="UniProtKB" id="P35732"/>
    </source>
</evidence>
<evidence type="ECO:0000255" key="2">
    <source>
        <dbReference type="PROSITE-ProRule" id="PRU00468"/>
    </source>
</evidence>
<evidence type="ECO:0000256" key="3">
    <source>
        <dbReference type="SAM" id="MobiDB-lite"/>
    </source>
</evidence>
<evidence type="ECO:0000305" key="4"/>